<keyword id="KW-0378">Hydrolase</keyword>
<keyword id="KW-0479">Metal-binding</keyword>
<keyword id="KW-0862">Zinc</keyword>
<gene>
    <name type="ordered locus">KPN78578_10290</name>
    <name type="ORF">KPN_01057</name>
</gene>
<feature type="chain" id="PRO_1000069022" description="Probable phosphatase KPN78578_10290">
    <location>
        <begin position="1"/>
        <end position="245"/>
    </location>
</feature>
<feature type="binding site" evidence="1">
    <location>
        <position position="7"/>
    </location>
    <ligand>
        <name>Zn(2+)</name>
        <dbReference type="ChEBI" id="CHEBI:29105"/>
        <label>1</label>
    </ligand>
</feature>
<feature type="binding site" evidence="1">
    <location>
        <position position="9"/>
    </location>
    <ligand>
        <name>Zn(2+)</name>
        <dbReference type="ChEBI" id="CHEBI:29105"/>
        <label>1</label>
    </ligand>
</feature>
<feature type="binding site" evidence="1">
    <location>
        <position position="15"/>
    </location>
    <ligand>
        <name>Zn(2+)</name>
        <dbReference type="ChEBI" id="CHEBI:29105"/>
        <label>2</label>
    </ligand>
</feature>
<feature type="binding site" evidence="1">
    <location>
        <position position="40"/>
    </location>
    <ligand>
        <name>Zn(2+)</name>
        <dbReference type="ChEBI" id="CHEBI:29105"/>
        <label>2</label>
    </ligand>
</feature>
<feature type="binding site" evidence="1">
    <location>
        <position position="73"/>
    </location>
    <ligand>
        <name>Zn(2+)</name>
        <dbReference type="ChEBI" id="CHEBI:29105"/>
        <label>1</label>
    </ligand>
</feature>
<feature type="binding site" evidence="1">
    <location>
        <position position="73"/>
    </location>
    <ligand>
        <name>Zn(2+)</name>
        <dbReference type="ChEBI" id="CHEBI:29105"/>
        <label>3</label>
    </ligand>
</feature>
<feature type="binding site" evidence="1">
    <location>
        <position position="101"/>
    </location>
    <ligand>
        <name>Zn(2+)</name>
        <dbReference type="ChEBI" id="CHEBI:29105"/>
        <label>3</label>
    </ligand>
</feature>
<feature type="binding site" evidence="1">
    <location>
        <position position="131"/>
    </location>
    <ligand>
        <name>Zn(2+)</name>
        <dbReference type="ChEBI" id="CHEBI:29105"/>
        <label>3</label>
    </ligand>
</feature>
<feature type="binding site" evidence="1">
    <location>
        <position position="192"/>
    </location>
    <ligand>
        <name>Zn(2+)</name>
        <dbReference type="ChEBI" id="CHEBI:29105"/>
        <label>1</label>
    </ligand>
</feature>
<feature type="binding site" evidence="1">
    <location>
        <position position="194"/>
    </location>
    <ligand>
        <name>Zn(2+)</name>
        <dbReference type="ChEBI" id="CHEBI:29105"/>
        <label>2</label>
    </ligand>
</feature>
<proteinExistence type="inferred from homology"/>
<evidence type="ECO:0000255" key="1">
    <source>
        <dbReference type="HAMAP-Rule" id="MF_01561"/>
    </source>
</evidence>
<organism>
    <name type="scientific">Klebsiella pneumoniae subsp. pneumoniae (strain ATCC 700721 / MGH 78578)</name>
    <dbReference type="NCBI Taxonomy" id="272620"/>
    <lineage>
        <taxon>Bacteria</taxon>
        <taxon>Pseudomonadati</taxon>
        <taxon>Pseudomonadota</taxon>
        <taxon>Gammaproteobacteria</taxon>
        <taxon>Enterobacterales</taxon>
        <taxon>Enterobacteriaceae</taxon>
        <taxon>Klebsiella/Raoultella group</taxon>
        <taxon>Klebsiella</taxon>
        <taxon>Klebsiella pneumoniae complex</taxon>
    </lineage>
</organism>
<name>Y1029_KLEP7</name>
<comment type="cofactor">
    <cofactor evidence="1">
        <name>Zn(2+)</name>
        <dbReference type="ChEBI" id="CHEBI:29105"/>
    </cofactor>
    <text evidence="1">Binds 3 Zn(2+) ions per subunit.</text>
</comment>
<comment type="subunit">
    <text evidence="1">Homotrimer.</text>
</comment>
<comment type="similarity">
    <text evidence="1">Belongs to the PHP family.</text>
</comment>
<protein>
    <recommendedName>
        <fullName evidence="1">Probable phosphatase KPN78578_10290</fullName>
        <ecNumber evidence="1">3.1.3.-</ecNumber>
    </recommendedName>
</protein>
<accession>A6T7B9</accession>
<dbReference type="EC" id="3.1.3.-" evidence="1"/>
<dbReference type="EMBL" id="CP000647">
    <property type="protein sequence ID" value="ABR76490.1"/>
    <property type="molecule type" value="Genomic_DNA"/>
</dbReference>
<dbReference type="RefSeq" id="WP_012068544.1">
    <property type="nucleotide sequence ID" value="NC_009648.1"/>
</dbReference>
<dbReference type="SMR" id="A6T7B9"/>
<dbReference type="STRING" id="272620.KPN_01057"/>
<dbReference type="jPOST" id="A6T7B9"/>
<dbReference type="PaxDb" id="272620-KPN_01057"/>
<dbReference type="EnsemblBacteria" id="ABR76490">
    <property type="protein sequence ID" value="ABR76490"/>
    <property type="gene ID" value="KPN_01057"/>
</dbReference>
<dbReference type="KEGG" id="kpn:KPN_01057"/>
<dbReference type="HOGENOM" id="CLU_061999_0_1_6"/>
<dbReference type="Proteomes" id="UP000000265">
    <property type="component" value="Chromosome"/>
</dbReference>
<dbReference type="GO" id="GO:0005829">
    <property type="term" value="C:cytosol"/>
    <property type="evidence" value="ECO:0007669"/>
    <property type="project" value="TreeGrafter"/>
</dbReference>
<dbReference type="GO" id="GO:0016791">
    <property type="term" value="F:phosphatase activity"/>
    <property type="evidence" value="ECO:0007669"/>
    <property type="project" value="UniProtKB-UniRule"/>
</dbReference>
<dbReference type="GO" id="GO:0008270">
    <property type="term" value="F:zinc ion binding"/>
    <property type="evidence" value="ECO:0007669"/>
    <property type="project" value="UniProtKB-UniRule"/>
</dbReference>
<dbReference type="GO" id="GO:0071978">
    <property type="term" value="P:bacterial-type flagellum-dependent swarming motility"/>
    <property type="evidence" value="ECO:0007669"/>
    <property type="project" value="TreeGrafter"/>
</dbReference>
<dbReference type="CDD" id="cd07437">
    <property type="entry name" value="PHP_HisPPase_Ycdx_like"/>
    <property type="match status" value="1"/>
</dbReference>
<dbReference type="FunFam" id="3.20.20.140:FF:000008">
    <property type="entry name" value="Probable phosphatase YcdX"/>
    <property type="match status" value="1"/>
</dbReference>
<dbReference type="Gene3D" id="3.20.20.140">
    <property type="entry name" value="Metal-dependent hydrolases"/>
    <property type="match status" value="1"/>
</dbReference>
<dbReference type="HAMAP" id="MF_01561">
    <property type="entry name" value="YcdX_phosphat"/>
    <property type="match status" value="1"/>
</dbReference>
<dbReference type="InterPro" id="IPR023710">
    <property type="entry name" value="Phosphatase_YcdX_put"/>
</dbReference>
<dbReference type="InterPro" id="IPR004013">
    <property type="entry name" value="PHP_dom"/>
</dbReference>
<dbReference type="InterPro" id="IPR050243">
    <property type="entry name" value="PHP_phosphatase"/>
</dbReference>
<dbReference type="InterPro" id="IPR003141">
    <property type="entry name" value="Pol/His_phosphatase_N"/>
</dbReference>
<dbReference type="InterPro" id="IPR016195">
    <property type="entry name" value="Pol/histidinol_Pase-like"/>
</dbReference>
<dbReference type="NCBIfam" id="NF006702">
    <property type="entry name" value="PRK09248.1"/>
    <property type="match status" value="1"/>
</dbReference>
<dbReference type="PANTHER" id="PTHR36928">
    <property type="entry name" value="PHOSPHATASE YCDX-RELATED"/>
    <property type="match status" value="1"/>
</dbReference>
<dbReference type="PANTHER" id="PTHR36928:SF1">
    <property type="entry name" value="PHOSPHATASE YCDX-RELATED"/>
    <property type="match status" value="1"/>
</dbReference>
<dbReference type="Pfam" id="PF02811">
    <property type="entry name" value="PHP"/>
    <property type="match status" value="1"/>
</dbReference>
<dbReference type="SMART" id="SM00481">
    <property type="entry name" value="POLIIIAc"/>
    <property type="match status" value="1"/>
</dbReference>
<dbReference type="SUPFAM" id="SSF89550">
    <property type="entry name" value="PHP domain-like"/>
    <property type="match status" value="1"/>
</dbReference>
<sequence length="245" mass="26974">MYPVDLHMHTVASTHAYSTLHDYIAEAKRKGIKLFAITDHGPDMADAPHYWHFVNMRIWPRLVDGVGILRGIESNIKNIEGEIDCSGPMLTSLDLIIAGFHEPVFPPQDRDTHTQAMIAAMASGKVHMISHPGNPKFPVDIPAIAEAAARYQVALEINNSSFVSSRMGSEDNCRAIAAAVRDAGGWVALGSDSHTAFTLGEFTECRKILDAVDFPEERILNVSPRRLLNFLESRGMPAIPEFADL</sequence>
<reference key="1">
    <citation type="submission" date="2006-09" db="EMBL/GenBank/DDBJ databases">
        <authorList>
            <consortium name="The Klebsiella pneumonia Genome Sequencing Project"/>
            <person name="McClelland M."/>
            <person name="Sanderson E.K."/>
            <person name="Spieth J."/>
            <person name="Clifton W.S."/>
            <person name="Latreille P."/>
            <person name="Sabo A."/>
            <person name="Pepin K."/>
            <person name="Bhonagiri V."/>
            <person name="Porwollik S."/>
            <person name="Ali J."/>
            <person name="Wilson R.K."/>
        </authorList>
    </citation>
    <scope>NUCLEOTIDE SEQUENCE [LARGE SCALE GENOMIC DNA]</scope>
    <source>
        <strain>ATCC 700721 / MGH 78578</strain>
    </source>
</reference>